<protein>
    <recommendedName>
        <fullName evidence="4">Neuroglobin</fullName>
    </recommendedName>
    <alternativeName>
        <fullName evidence="2">Nitrite reductase</fullName>
        <ecNumber evidence="2">1.7.-.-</ecNumber>
    </alternativeName>
</protein>
<keyword id="KW-0963">Cytoplasm</keyword>
<keyword id="KW-0349">Heme</keyword>
<keyword id="KW-0408">Iron</keyword>
<keyword id="KW-0479">Metal-binding</keyword>
<keyword id="KW-0496">Mitochondrion</keyword>
<keyword id="KW-0560">Oxidoreductase</keyword>
<dbReference type="EC" id="1.7.-.-" evidence="2"/>
<dbReference type="EMBL" id="FM204871">
    <property type="protein sequence ID" value="CAR57911.1"/>
    <property type="molecule type" value="Genomic_DNA"/>
</dbReference>
<dbReference type="SMR" id="P86881"/>
<dbReference type="OrthoDB" id="6344802at2759"/>
<dbReference type="GO" id="GO:0005829">
    <property type="term" value="C:cytosol"/>
    <property type="evidence" value="ECO:0007669"/>
    <property type="project" value="UniProtKB-SubCell"/>
</dbReference>
<dbReference type="GO" id="GO:0005759">
    <property type="term" value="C:mitochondrial matrix"/>
    <property type="evidence" value="ECO:0007669"/>
    <property type="project" value="UniProtKB-SubCell"/>
</dbReference>
<dbReference type="GO" id="GO:0005092">
    <property type="term" value="F:GDP-dissociation inhibitor activity"/>
    <property type="evidence" value="ECO:0000250"/>
    <property type="project" value="UniProtKB"/>
</dbReference>
<dbReference type="GO" id="GO:0020037">
    <property type="term" value="F:heme binding"/>
    <property type="evidence" value="ECO:0007669"/>
    <property type="project" value="InterPro"/>
</dbReference>
<dbReference type="GO" id="GO:0046872">
    <property type="term" value="F:metal ion binding"/>
    <property type="evidence" value="ECO:0007669"/>
    <property type="project" value="UniProtKB-KW"/>
</dbReference>
<dbReference type="GO" id="GO:0098809">
    <property type="term" value="F:nitrite reductase activity"/>
    <property type="evidence" value="ECO:0000250"/>
    <property type="project" value="UniProtKB"/>
</dbReference>
<dbReference type="GO" id="GO:0019825">
    <property type="term" value="F:oxygen binding"/>
    <property type="evidence" value="ECO:0000250"/>
    <property type="project" value="UniProtKB"/>
</dbReference>
<dbReference type="GO" id="GO:0071456">
    <property type="term" value="P:cellular response to hypoxia"/>
    <property type="evidence" value="ECO:0000250"/>
    <property type="project" value="UniProtKB"/>
</dbReference>
<dbReference type="Gene3D" id="1.10.490.10">
    <property type="entry name" value="Globins"/>
    <property type="match status" value="1"/>
</dbReference>
<dbReference type="InterPro" id="IPR000971">
    <property type="entry name" value="Globin"/>
</dbReference>
<dbReference type="InterPro" id="IPR050532">
    <property type="entry name" value="Globin-like_OT"/>
</dbReference>
<dbReference type="InterPro" id="IPR009050">
    <property type="entry name" value="Globin-like_sf"/>
</dbReference>
<dbReference type="InterPro" id="IPR012292">
    <property type="entry name" value="Globin/Proto"/>
</dbReference>
<dbReference type="PANTHER" id="PTHR46458">
    <property type="entry name" value="BLR2807 PROTEIN"/>
    <property type="match status" value="1"/>
</dbReference>
<dbReference type="PANTHER" id="PTHR46458:SF19">
    <property type="entry name" value="NEUROGLOBIN"/>
    <property type="match status" value="1"/>
</dbReference>
<dbReference type="Pfam" id="PF00042">
    <property type="entry name" value="Globin"/>
    <property type="match status" value="1"/>
</dbReference>
<dbReference type="PRINTS" id="PR00188">
    <property type="entry name" value="PLANTGLOBIN"/>
</dbReference>
<dbReference type="SUPFAM" id="SSF46458">
    <property type="entry name" value="Globin-like"/>
    <property type="match status" value="1"/>
</dbReference>
<dbReference type="PROSITE" id="PS01033">
    <property type="entry name" value="GLOBIN"/>
    <property type="match status" value="1"/>
</dbReference>
<organism>
    <name type="scientific">Dissostichus mawsoni</name>
    <name type="common">Antarctic cod</name>
    <dbReference type="NCBI Taxonomy" id="36200"/>
    <lineage>
        <taxon>Eukaryota</taxon>
        <taxon>Metazoa</taxon>
        <taxon>Chordata</taxon>
        <taxon>Craniata</taxon>
        <taxon>Vertebrata</taxon>
        <taxon>Euteleostomi</taxon>
        <taxon>Actinopterygii</taxon>
        <taxon>Neopterygii</taxon>
        <taxon>Teleostei</taxon>
        <taxon>Neoteleostei</taxon>
        <taxon>Acanthomorphata</taxon>
        <taxon>Eupercaria</taxon>
        <taxon>Perciformes</taxon>
        <taxon>Notothenioidei</taxon>
        <taxon>Nototheniidae</taxon>
        <taxon>Dissostichus</taxon>
    </lineage>
</organism>
<sequence length="159" mass="17669">MEKLSEKDKELIRGSWESLGKNKVPHGVVMFSRLFELDPELLTLFHYTTNCGSTQDCLSSPEFLEHVTKVMLVIDAAVSNLDDLPSLEDFLLNLGRKHQAVGVNTQSFAEVGESLLHMLQCSLGQAYTAPLRQAWLNLYSIVVAAMSQGWAKNGEDKAD</sequence>
<comment type="function">
    <text evidence="2">Monomeric globin with a bis-histidyl six-coordinate heme-iron atom through which it can bind dioxygen, carbon monoxide and nitric oxide. Could help transport oxygen and increase its availability to the metabolically active neuronal tissues, though its low quantity in tissues as well as its high affinity for dioxygen, which may limit its oxygen-releasing ability, argue against it. The ferrous/deoxygenated form exhibits a nitrite reductase activity and it could produce nitric oxide which in turn inhibits cellular respiration in response to hypoxia. In its ferrous/deoxygenated state, it may also exhibit GDI (Guanine nucleotide Dissociation Inhibitor) activity toward heterotrimeric G-alpha proteins, thereby regulating signal transduction to facilitate neuroprotective responses in the wake of hypoxia and associated oxidative stress.</text>
</comment>
<comment type="catalytic activity">
    <reaction evidence="2">
        <text>Fe(III)-heme b-[protein] + nitric oxide + H2O = Fe(II)-heme b-[protein] + nitrite + 2 H(+)</text>
        <dbReference type="Rhea" id="RHEA:77711"/>
        <dbReference type="Rhea" id="RHEA-COMP:18975"/>
        <dbReference type="Rhea" id="RHEA-COMP:18976"/>
        <dbReference type="ChEBI" id="CHEBI:15377"/>
        <dbReference type="ChEBI" id="CHEBI:15378"/>
        <dbReference type="ChEBI" id="CHEBI:16301"/>
        <dbReference type="ChEBI" id="CHEBI:16480"/>
        <dbReference type="ChEBI" id="CHEBI:55376"/>
        <dbReference type="ChEBI" id="CHEBI:60344"/>
    </reaction>
    <physiologicalReaction direction="right-to-left" evidence="2">
        <dbReference type="Rhea" id="RHEA:77713"/>
    </physiologicalReaction>
</comment>
<comment type="subunit">
    <text evidence="1 2">Monomer (By similarity). Homodimers and homotetramers. Mainly monomeric but also detected as part of homodimers and homotetramers (By similarity).</text>
</comment>
<comment type="subcellular location">
    <subcellularLocation>
        <location evidence="1">Cytoplasm</location>
        <location evidence="1">Cytosol</location>
    </subcellularLocation>
    <subcellularLocation>
        <location evidence="1">Mitochondrion matrix</location>
    </subcellularLocation>
    <text evidence="1">Enriched in mitochondrial matrix upon oxygen-glucose deprivation.</text>
</comment>
<comment type="similarity">
    <text evidence="3">Belongs to the globin family.</text>
</comment>
<gene>
    <name type="primary">ngb</name>
</gene>
<proteinExistence type="evidence at transcript level"/>
<accession>P86881</accession>
<accession>D2EA91</accession>
<reference evidence="5" key="1">
    <citation type="journal article" date="2011" name="IUBMB Life">
        <title>Structure and dynamics of Antarctic fish neuroglobin assessed by computer simulations.</title>
        <authorList>
            <person name="Boron I."/>
            <person name="Russo R."/>
            <person name="Boechi L."/>
            <person name="Cheng C.H."/>
            <person name="di Prisco G."/>
            <person name="Estrin D.A."/>
            <person name="Verde C."/>
            <person name="Nadra A.D."/>
        </authorList>
    </citation>
    <scope>NUCLEOTIDE SEQUENCE [MRNA]</scope>
    <source>
        <tissue>Retina</tissue>
    </source>
</reference>
<reference evidence="5 6" key="2">
    <citation type="journal article" date="2009" name="IUBMB Life">
        <title>The 'icefish paradox.' Which is the task of neuroglobin in Antarctic hemoglobin-less icefish?</title>
        <authorList>
            <person name="Cheng C.H."/>
            <person name="di Prisco G."/>
            <person name="Verde C."/>
        </authorList>
    </citation>
    <scope>NUCLEOTIDE SEQUENCE [MRNA] OF 1-148</scope>
</reference>
<evidence type="ECO:0000250" key="1">
    <source>
        <dbReference type="UniProtKB" id="Q9ER97"/>
    </source>
</evidence>
<evidence type="ECO:0000250" key="2">
    <source>
        <dbReference type="UniProtKB" id="Q9NPG2"/>
    </source>
</evidence>
<evidence type="ECO:0000255" key="3">
    <source>
        <dbReference type="PROSITE-ProRule" id="PRU00238"/>
    </source>
</evidence>
<evidence type="ECO:0000303" key="4">
    <source>
    </source>
</evidence>
<evidence type="ECO:0000305" key="5"/>
<evidence type="ECO:0000312" key="6">
    <source>
        <dbReference type="EMBL" id="CAR57911.1"/>
    </source>
</evidence>
<feature type="chain" id="PRO_0000419966" description="Neuroglobin">
    <location>
        <begin position="1"/>
        <end position="159"/>
    </location>
</feature>
<feature type="domain" description="Globin" evidence="3">
    <location>
        <begin position="3"/>
        <end position="151"/>
    </location>
</feature>
<feature type="binding site" description="distal binding residue; reversible" evidence="2 3">
    <location>
        <position position="66"/>
    </location>
    <ligand>
        <name>heme b</name>
        <dbReference type="ChEBI" id="CHEBI:60344"/>
    </ligand>
    <ligandPart>
        <name>Fe</name>
        <dbReference type="ChEBI" id="CHEBI:18248"/>
    </ligandPart>
</feature>
<feature type="binding site" description="proximal binding residue" evidence="2 3">
    <location>
        <position position="98"/>
    </location>
    <ligand>
        <name>heme b</name>
        <dbReference type="ChEBI" id="CHEBI:60344"/>
    </ligand>
    <ligandPart>
        <name>Fe</name>
        <dbReference type="ChEBI" id="CHEBI:18248"/>
    </ligandPart>
</feature>
<name>NGB_DISMA</name>